<comment type="function">
    <text evidence="1">Involved in peptide bond synthesis. Alleviates ribosome stalling that occurs when 3 or more consecutive Pro residues or the sequence PPG is present in a protein, possibly by augmenting the peptidyl transferase activity of the ribosome. Modification of Lys-34 is required for alleviation.</text>
</comment>
<comment type="pathway">
    <text evidence="1">Protein biosynthesis; polypeptide chain elongation.</text>
</comment>
<comment type="subcellular location">
    <subcellularLocation>
        <location evidence="1">Cytoplasm</location>
    </subcellularLocation>
</comment>
<comment type="PTM">
    <text evidence="1">May be beta-lysylated on the epsilon-amino group of Lys-34 by the combined action of EpmA and EpmB, and then hydroxylated on the C5 position of the same residue by EpmC (if this protein is present). Lysylation is critical for the stimulatory effect of EF-P on peptide-bond formation. The lysylation moiety may extend toward the peptidyltransferase center and stabilize the terminal 3-CCA end of the tRNA. Hydroxylation of the C5 position on Lys-34 may allow additional potential stabilizing hydrogen-bond interactions with the P-tRNA.</text>
</comment>
<comment type="similarity">
    <text evidence="1">Belongs to the elongation factor P family.</text>
</comment>
<proteinExistence type="inferred from homology"/>
<keyword id="KW-0963">Cytoplasm</keyword>
<keyword id="KW-0251">Elongation factor</keyword>
<keyword id="KW-0379">Hydroxylation</keyword>
<keyword id="KW-0648">Protein biosynthesis</keyword>
<evidence type="ECO:0000255" key="1">
    <source>
        <dbReference type="HAMAP-Rule" id="MF_00141"/>
    </source>
</evidence>
<sequence length="188" mass="21045">MATHSTNEFRGGLKVMVDGDPCSIIDNEFVKPGKGQAFNRVKFRNLKTGRVLERTFKSGETLPAADVVEVEMQYLYNDGEFWHFMTSENYEQHAASKEAVAEAKQWLKEEALCMVTMWNGVPLSVEPPNFVELKITETEPGVRGDTATGGTKRAKLETGAVVRVPLFLNEGEIIKVDTRRGEYVSRAK</sequence>
<reference key="1">
    <citation type="submission" date="2007-11" db="EMBL/GenBank/DDBJ databases">
        <title>Genome sequencing of phylogenetically and phenotypically diverse Coxiella burnetii isolates.</title>
        <authorList>
            <person name="Seshadri R."/>
            <person name="Samuel J.E."/>
        </authorList>
    </citation>
    <scope>NUCLEOTIDE SEQUENCE [LARGE SCALE GENOMIC DNA]</scope>
    <source>
        <strain>RSA 331 / Henzerling II</strain>
    </source>
</reference>
<feature type="chain" id="PRO_1000076512" description="Elongation factor P">
    <location>
        <begin position="1"/>
        <end position="188"/>
    </location>
</feature>
<feature type="modified residue" description="N6-(3,6-diaminohexanoyl)-5-hydroxylysine" evidence="1">
    <location>
        <position position="34"/>
    </location>
</feature>
<protein>
    <recommendedName>
        <fullName evidence="1">Elongation factor P</fullName>
        <shortName evidence="1">EF-P</shortName>
    </recommendedName>
</protein>
<gene>
    <name evidence="1" type="primary">efp</name>
    <name type="ordered locus">COXBURSA331_A2015</name>
</gene>
<dbReference type="EMBL" id="CP000890">
    <property type="protein sequence ID" value="ABX78625.1"/>
    <property type="molecule type" value="Genomic_DNA"/>
</dbReference>
<dbReference type="RefSeq" id="WP_005772139.1">
    <property type="nucleotide sequence ID" value="NC_010117.1"/>
</dbReference>
<dbReference type="SMR" id="A9NAR1"/>
<dbReference type="KEGG" id="cbs:COXBURSA331_A2015"/>
<dbReference type="HOGENOM" id="CLU_074944_0_0_6"/>
<dbReference type="UniPathway" id="UPA00345"/>
<dbReference type="GO" id="GO:0005737">
    <property type="term" value="C:cytoplasm"/>
    <property type="evidence" value="ECO:0007669"/>
    <property type="project" value="UniProtKB-SubCell"/>
</dbReference>
<dbReference type="GO" id="GO:0003746">
    <property type="term" value="F:translation elongation factor activity"/>
    <property type="evidence" value="ECO:0007669"/>
    <property type="project" value="UniProtKB-UniRule"/>
</dbReference>
<dbReference type="GO" id="GO:0043043">
    <property type="term" value="P:peptide biosynthetic process"/>
    <property type="evidence" value="ECO:0007669"/>
    <property type="project" value="InterPro"/>
</dbReference>
<dbReference type="CDD" id="cd04470">
    <property type="entry name" value="S1_EF-P_repeat_1"/>
    <property type="match status" value="1"/>
</dbReference>
<dbReference type="CDD" id="cd05794">
    <property type="entry name" value="S1_EF-P_repeat_2"/>
    <property type="match status" value="1"/>
</dbReference>
<dbReference type="FunFam" id="2.30.30.30:FF:000003">
    <property type="entry name" value="Elongation factor P"/>
    <property type="match status" value="1"/>
</dbReference>
<dbReference type="FunFam" id="2.40.50.140:FF:000004">
    <property type="entry name" value="Elongation factor P"/>
    <property type="match status" value="1"/>
</dbReference>
<dbReference type="FunFam" id="2.40.50.140:FF:000009">
    <property type="entry name" value="Elongation factor P"/>
    <property type="match status" value="1"/>
</dbReference>
<dbReference type="Gene3D" id="2.30.30.30">
    <property type="match status" value="1"/>
</dbReference>
<dbReference type="Gene3D" id="2.40.50.140">
    <property type="entry name" value="Nucleic acid-binding proteins"/>
    <property type="match status" value="2"/>
</dbReference>
<dbReference type="HAMAP" id="MF_00141">
    <property type="entry name" value="EF_P"/>
    <property type="match status" value="1"/>
</dbReference>
<dbReference type="InterPro" id="IPR015365">
    <property type="entry name" value="Elong-fact-P_C"/>
</dbReference>
<dbReference type="InterPro" id="IPR012340">
    <property type="entry name" value="NA-bd_OB-fold"/>
</dbReference>
<dbReference type="InterPro" id="IPR014722">
    <property type="entry name" value="Rib_uL2_dom2"/>
</dbReference>
<dbReference type="InterPro" id="IPR020599">
    <property type="entry name" value="Transl_elong_fac_P/YeiP"/>
</dbReference>
<dbReference type="InterPro" id="IPR013185">
    <property type="entry name" value="Transl_elong_KOW-like"/>
</dbReference>
<dbReference type="InterPro" id="IPR001059">
    <property type="entry name" value="Transl_elong_P/YeiP_cen"/>
</dbReference>
<dbReference type="InterPro" id="IPR013852">
    <property type="entry name" value="Transl_elong_P/YeiP_CS"/>
</dbReference>
<dbReference type="InterPro" id="IPR011768">
    <property type="entry name" value="Transl_elongation_fac_P"/>
</dbReference>
<dbReference type="InterPro" id="IPR008991">
    <property type="entry name" value="Translation_prot_SH3-like_sf"/>
</dbReference>
<dbReference type="NCBIfam" id="TIGR00038">
    <property type="entry name" value="efp"/>
    <property type="match status" value="1"/>
</dbReference>
<dbReference type="NCBIfam" id="NF001810">
    <property type="entry name" value="PRK00529.1"/>
    <property type="match status" value="1"/>
</dbReference>
<dbReference type="PANTHER" id="PTHR30053">
    <property type="entry name" value="ELONGATION FACTOR P"/>
    <property type="match status" value="1"/>
</dbReference>
<dbReference type="PANTHER" id="PTHR30053:SF12">
    <property type="entry name" value="ELONGATION FACTOR P (EF-P) FAMILY PROTEIN"/>
    <property type="match status" value="1"/>
</dbReference>
<dbReference type="Pfam" id="PF01132">
    <property type="entry name" value="EFP"/>
    <property type="match status" value="1"/>
</dbReference>
<dbReference type="Pfam" id="PF08207">
    <property type="entry name" value="EFP_N"/>
    <property type="match status" value="1"/>
</dbReference>
<dbReference type="Pfam" id="PF09285">
    <property type="entry name" value="Elong-fact-P_C"/>
    <property type="match status" value="1"/>
</dbReference>
<dbReference type="PIRSF" id="PIRSF005901">
    <property type="entry name" value="EF-P"/>
    <property type="match status" value="1"/>
</dbReference>
<dbReference type="SMART" id="SM01185">
    <property type="entry name" value="EFP"/>
    <property type="match status" value="1"/>
</dbReference>
<dbReference type="SMART" id="SM00841">
    <property type="entry name" value="Elong-fact-P_C"/>
    <property type="match status" value="1"/>
</dbReference>
<dbReference type="SUPFAM" id="SSF50249">
    <property type="entry name" value="Nucleic acid-binding proteins"/>
    <property type="match status" value="2"/>
</dbReference>
<dbReference type="SUPFAM" id="SSF50104">
    <property type="entry name" value="Translation proteins SH3-like domain"/>
    <property type="match status" value="1"/>
</dbReference>
<dbReference type="PROSITE" id="PS01275">
    <property type="entry name" value="EFP"/>
    <property type="match status" value="1"/>
</dbReference>
<name>EFP_COXBR</name>
<organism>
    <name type="scientific">Coxiella burnetii (strain RSA 331 / Henzerling II)</name>
    <dbReference type="NCBI Taxonomy" id="360115"/>
    <lineage>
        <taxon>Bacteria</taxon>
        <taxon>Pseudomonadati</taxon>
        <taxon>Pseudomonadota</taxon>
        <taxon>Gammaproteobacteria</taxon>
        <taxon>Legionellales</taxon>
        <taxon>Coxiellaceae</taxon>
        <taxon>Coxiella</taxon>
    </lineage>
</organism>
<accession>A9NAR1</accession>